<feature type="chain" id="PRO_1000051522" description="4-hydroxythreonine-4-phosphate dehydrogenase">
    <location>
        <begin position="1"/>
        <end position="340"/>
    </location>
</feature>
<feature type="binding site" evidence="1">
    <location>
        <position position="135"/>
    </location>
    <ligand>
        <name>substrate</name>
    </ligand>
</feature>
<feature type="binding site" evidence="1">
    <location>
        <position position="170"/>
    </location>
    <ligand>
        <name>a divalent metal cation</name>
        <dbReference type="ChEBI" id="CHEBI:60240"/>
        <note>ligand shared between dimeric partners</note>
    </ligand>
</feature>
<feature type="binding site" evidence="1">
    <location>
        <position position="215"/>
    </location>
    <ligand>
        <name>a divalent metal cation</name>
        <dbReference type="ChEBI" id="CHEBI:60240"/>
        <note>ligand shared between dimeric partners</note>
    </ligand>
</feature>
<feature type="binding site" evidence="1">
    <location>
        <position position="276"/>
    </location>
    <ligand>
        <name>a divalent metal cation</name>
        <dbReference type="ChEBI" id="CHEBI:60240"/>
        <note>ligand shared between dimeric partners</note>
    </ligand>
</feature>
<feature type="binding site" evidence="1">
    <location>
        <position position="284"/>
    </location>
    <ligand>
        <name>substrate</name>
    </ligand>
</feature>
<feature type="binding site" evidence="1">
    <location>
        <position position="293"/>
    </location>
    <ligand>
        <name>substrate</name>
    </ligand>
</feature>
<feature type="binding site" evidence="1">
    <location>
        <position position="302"/>
    </location>
    <ligand>
        <name>substrate</name>
    </ligand>
</feature>
<reference key="1">
    <citation type="journal article" date="2007" name="ISME J.">
        <title>Population level functional diversity in a microbial community revealed by comparative genomic and metagenomic analyses.</title>
        <authorList>
            <person name="Bhaya D."/>
            <person name="Grossman A.R."/>
            <person name="Steunou A.-S."/>
            <person name="Khuri N."/>
            <person name="Cohan F.M."/>
            <person name="Hamamura N."/>
            <person name="Melendrez M.C."/>
            <person name="Bateson M.M."/>
            <person name="Ward D.M."/>
            <person name="Heidelberg J.F."/>
        </authorList>
    </citation>
    <scope>NUCLEOTIDE SEQUENCE [LARGE SCALE GENOMIC DNA]</scope>
    <source>
        <strain>JA-2-3B'a(2-13)</strain>
    </source>
</reference>
<protein>
    <recommendedName>
        <fullName evidence="1">4-hydroxythreonine-4-phosphate dehydrogenase</fullName>
        <ecNumber evidence="1">1.1.1.262</ecNumber>
    </recommendedName>
    <alternativeName>
        <fullName evidence="1">4-(phosphohydroxy)-L-threonine dehydrogenase</fullName>
    </alternativeName>
</protein>
<name>PDXA_SYNJB</name>
<dbReference type="EC" id="1.1.1.262" evidence="1"/>
<dbReference type="EMBL" id="CP000240">
    <property type="protein sequence ID" value="ABD02723.1"/>
    <property type="molecule type" value="Genomic_DNA"/>
</dbReference>
<dbReference type="RefSeq" id="WP_011433365.1">
    <property type="nucleotide sequence ID" value="NC_007776.1"/>
</dbReference>
<dbReference type="SMR" id="Q2JKQ8"/>
<dbReference type="STRING" id="321332.CYB_1766"/>
<dbReference type="KEGG" id="cyb:CYB_1766"/>
<dbReference type="eggNOG" id="COG1995">
    <property type="taxonomic scope" value="Bacteria"/>
</dbReference>
<dbReference type="HOGENOM" id="CLU_040168_1_0_3"/>
<dbReference type="OrthoDB" id="9801783at2"/>
<dbReference type="UniPathway" id="UPA00244">
    <property type="reaction ID" value="UER00312"/>
</dbReference>
<dbReference type="Proteomes" id="UP000001938">
    <property type="component" value="Chromosome"/>
</dbReference>
<dbReference type="GO" id="GO:0005737">
    <property type="term" value="C:cytoplasm"/>
    <property type="evidence" value="ECO:0007669"/>
    <property type="project" value="UniProtKB-SubCell"/>
</dbReference>
<dbReference type="GO" id="GO:0050570">
    <property type="term" value="F:4-hydroxythreonine-4-phosphate dehydrogenase activity"/>
    <property type="evidence" value="ECO:0007669"/>
    <property type="project" value="UniProtKB-UniRule"/>
</dbReference>
<dbReference type="GO" id="GO:0046872">
    <property type="term" value="F:metal ion binding"/>
    <property type="evidence" value="ECO:0007669"/>
    <property type="project" value="UniProtKB-UniRule"/>
</dbReference>
<dbReference type="GO" id="GO:0051287">
    <property type="term" value="F:NAD binding"/>
    <property type="evidence" value="ECO:0007669"/>
    <property type="project" value="InterPro"/>
</dbReference>
<dbReference type="GO" id="GO:0042823">
    <property type="term" value="P:pyridoxal phosphate biosynthetic process"/>
    <property type="evidence" value="ECO:0007669"/>
    <property type="project" value="UniProtKB-UniRule"/>
</dbReference>
<dbReference type="GO" id="GO:0008615">
    <property type="term" value="P:pyridoxine biosynthetic process"/>
    <property type="evidence" value="ECO:0007669"/>
    <property type="project" value="UniProtKB-UniRule"/>
</dbReference>
<dbReference type="Gene3D" id="3.40.718.10">
    <property type="entry name" value="Isopropylmalate Dehydrogenase"/>
    <property type="match status" value="1"/>
</dbReference>
<dbReference type="HAMAP" id="MF_00536">
    <property type="entry name" value="PdxA"/>
    <property type="match status" value="1"/>
</dbReference>
<dbReference type="InterPro" id="IPR037510">
    <property type="entry name" value="PdxA"/>
</dbReference>
<dbReference type="InterPro" id="IPR005255">
    <property type="entry name" value="PdxA_fam"/>
</dbReference>
<dbReference type="NCBIfam" id="TIGR00557">
    <property type="entry name" value="pdxA"/>
    <property type="match status" value="1"/>
</dbReference>
<dbReference type="NCBIfam" id="NF002744">
    <property type="entry name" value="PRK02746.1"/>
    <property type="match status" value="1"/>
</dbReference>
<dbReference type="PANTHER" id="PTHR30004">
    <property type="entry name" value="4-HYDROXYTHREONINE-4-PHOSPHATE DEHYDROGENASE"/>
    <property type="match status" value="1"/>
</dbReference>
<dbReference type="PANTHER" id="PTHR30004:SF6">
    <property type="entry name" value="D-THREONATE 4-PHOSPHATE DEHYDROGENASE"/>
    <property type="match status" value="1"/>
</dbReference>
<dbReference type="Pfam" id="PF04166">
    <property type="entry name" value="PdxA"/>
    <property type="match status" value="1"/>
</dbReference>
<dbReference type="SUPFAM" id="SSF53659">
    <property type="entry name" value="Isocitrate/Isopropylmalate dehydrogenase-like"/>
    <property type="match status" value="1"/>
</dbReference>
<keyword id="KW-0963">Cytoplasm</keyword>
<keyword id="KW-0479">Metal-binding</keyword>
<keyword id="KW-0520">NAD</keyword>
<keyword id="KW-0521">NADP</keyword>
<keyword id="KW-0560">Oxidoreductase</keyword>
<keyword id="KW-0664">Pyridoxine biosynthesis</keyword>
<keyword id="KW-1185">Reference proteome</keyword>
<accession>Q2JKQ8</accession>
<gene>
    <name evidence="1" type="primary">pdxA</name>
    <name type="ordered locus">CYB_1766</name>
</gene>
<evidence type="ECO:0000255" key="1">
    <source>
        <dbReference type="HAMAP-Rule" id="MF_00536"/>
    </source>
</evidence>
<organism>
    <name type="scientific">Synechococcus sp. (strain JA-2-3B'a(2-13))</name>
    <name type="common">Cyanobacteria bacterium Yellowstone B-Prime</name>
    <dbReference type="NCBI Taxonomy" id="321332"/>
    <lineage>
        <taxon>Bacteria</taxon>
        <taxon>Bacillati</taxon>
        <taxon>Cyanobacteriota</taxon>
        <taxon>Cyanophyceae</taxon>
        <taxon>Synechococcales</taxon>
        <taxon>Synechococcaceae</taxon>
        <taxon>Synechococcus</taxon>
    </lineage>
</organism>
<proteinExistence type="inferred from homology"/>
<comment type="function">
    <text evidence="1">Catalyzes the NAD(P)-dependent oxidation of 4-(phosphooxy)-L-threonine (HTP) into 2-amino-3-oxo-4-(phosphooxy)butyric acid which spontaneously decarboxylates to form 3-amino-2-oxopropyl phosphate (AHAP).</text>
</comment>
<comment type="catalytic activity">
    <reaction evidence="1">
        <text>4-(phosphooxy)-L-threonine + NAD(+) = 3-amino-2-oxopropyl phosphate + CO2 + NADH</text>
        <dbReference type="Rhea" id="RHEA:32275"/>
        <dbReference type="ChEBI" id="CHEBI:16526"/>
        <dbReference type="ChEBI" id="CHEBI:57279"/>
        <dbReference type="ChEBI" id="CHEBI:57540"/>
        <dbReference type="ChEBI" id="CHEBI:57945"/>
        <dbReference type="ChEBI" id="CHEBI:58452"/>
        <dbReference type="EC" id="1.1.1.262"/>
    </reaction>
</comment>
<comment type="cofactor">
    <cofactor evidence="1">
        <name>a divalent metal cation</name>
        <dbReference type="ChEBI" id="CHEBI:60240"/>
    </cofactor>
    <text evidence="1">Binds 1 divalent metal cation per subunit.</text>
</comment>
<comment type="pathway">
    <text evidence="1">Cofactor biosynthesis; pyridoxine 5'-phosphate biosynthesis; pyridoxine 5'-phosphate from D-erythrose 4-phosphate: step 4/5.</text>
</comment>
<comment type="subunit">
    <text evidence="1">Homodimer.</text>
</comment>
<comment type="subcellular location">
    <subcellularLocation>
        <location evidence="1">Cytoplasm</location>
    </subcellularLocation>
</comment>
<comment type="miscellaneous">
    <text evidence="1">The active site is located at the dimer interface.</text>
</comment>
<comment type="similarity">
    <text evidence="1">Belongs to the PdxA family.</text>
</comment>
<sequence>MSIPRPKLALTLGDPAGIGPEIVLKALADPEVQSCAHITVVGDRQVLEATYRLLRDRSPAPLAHPAGIPMLECDTGFRLQPGCIGQGDADSGAVSFAYLRTAVERTLQGEFQGIVTAPIAKYLWHRAGHRFPGQTEVLAQLSRSEHYGMMFVARSPHSGWQMRVLLATTHIPLGQVPTVLTPERVRTALDLLVGSLRHTFGIPDPVIAVAGLNPHAGEQGQLGSEEKEWLTELLRTYAHAQIWGPLPPDTMWLAPAQAWHGQGSPAVADAYLALYHDQGLIPVKMLAFDRAVNLTTGLPFVRTSPDHGTAFDIAGQGVARCESLKQAILLAAELLGKNPS</sequence>